<comment type="function">
    <text evidence="5 6 7 8 9">Transcription factor that binds to the promoter of target genes (PubMed:16168406, PubMed:26305787, PubMed:26341465). Regulates genes involved in serotonin synthesis and release in serotonergic ADF neurons (PubMed:16168406, PubMed:26305787). Involved in specification of neuron cell fate, olfactory receptor expression, locomotion, and foraging behavior (PubMed:10421632, PubMed:26305787). Required in AWB olfactory neurons to repress AWC cell fate and promote the AWB cell fate during early development (PubMed:10421632). Cooperates with additional factors to direct the differentiation of the olfactory neurons, functioning with the transcription factor sox-2 to suppress AWC terminal differentiation and promote AWB neuron differentiation (PubMed:26341465). Involved in regulating terminal specification and maintenance of the SMB sensory/inter/motor neurons (PubMed:26305787). Plays a role in regulation of RID motor neuron differentiation, but is dispensable for motor axon outgrowth in the dorsal nerve cord (PubMed:14568548). May regulate its own expression (PubMed:10421632, PubMed:26305787).</text>
</comment>
<comment type="subunit">
    <text evidence="9">Interacts with transcription factor sox-2.</text>
</comment>
<comment type="subcellular location">
    <subcellularLocation>
        <location evidence="1 3">Nucleus</location>
    </subcellularLocation>
</comment>
<comment type="alternative products">
    <event type="alternative splicing"/>
    <isoform>
        <id>G5EEA1-1</id>
        <name evidence="13">a</name>
        <sequence type="displayed"/>
    </isoform>
    <isoform>
        <id>G5EEA1-2</id>
        <name evidence="14">b</name>
        <sequence type="described" ref="VSP_061067"/>
    </isoform>
    <isoform>
        <id>G5EEA1-3</id>
        <name evidence="15">c</name>
        <sequence type="described" ref="VSP_061066"/>
    </isoform>
</comment>
<comment type="tissue specificity">
    <text evidence="5 8">Expressed in the AWB sensory neurons and in one RME motor neuron (RMEV), two RMD motor neurons (RMDL and RMDR), the RID, RIV, SAA and SIA interneurons and the SMB sensory/inter/motor neurons.</text>
</comment>
<comment type="developmental stage">
    <text evidence="5 7 8">Expressed in larvae and adults in neurons in the anterior ganglia (PubMed:10421632). Expressed in the precursor of serotonergic ADF neurons (PubMed:16168406). Expressed in the SMB sensory/inter/motor neurons at larval stage L1 (PubMed:26305787).</text>
</comment>
<comment type="caution">
    <text evidence="5 8">It has been reported that lim-4 is expressed in the SIA interneurons (PubMed:10421632). However, a subsequent report suggests that this was a mis-identification, instead indicating that the correct cell type is the SMB sensory/inter/motor neuron (PubMed:26305787).</text>
</comment>
<protein>
    <recommendedName>
        <fullName evidence="10">LIM/homeobox protein lim-4</fullName>
    </recommendedName>
</protein>
<sequence>MDAHLVQAKKTSTASELSDSSLTFPFIGDYLSSPSLTTSDYVSDCSNLTVEGPVPANQEFSSSDESSVYISSALRLADYAFTPDDNIRIKPDAVIVICTQCQHQIQDKFFLSIDGRNYHENCLQCSTCENPLSNKCFYKDKTFYCKGCYFRTHVTSTASSCRELGPKCASCDRTIQATDWVRRARNYVYHLACFSCNQCKRQLSTGEEYALQEGNLLCKQHFLELVEGDSGVSSQKAKTKRVRTTFAEDQLSVLQTYFNRDSNPDGADLEKIASMTGLSKRVTQVWFQNSRARQKKWHQKSEGDNGDSQRSSVGPSSPSQKSDSSSEMMYPTSVTTSVEDAIPDSIVILGSLQFD</sequence>
<accession>G5EEA1</accession>
<accession>A0A1X7RBW0</accession>
<accession>A0A1X7RC92</accession>
<reference evidence="11" key="1">
    <citation type="journal article" date="1999" name="Genes Dev.">
        <title>Alternative olfactory neuron fates are specified by the LIM homeobox gene lim-4.</title>
        <authorList>
            <person name="Sagasti A."/>
            <person name="Hobert O."/>
            <person name="Troemel E.R."/>
            <person name="Ruvkun G."/>
            <person name="Bargmann C.I."/>
        </authorList>
    </citation>
    <scope>NUCLEOTIDE SEQUENCE [MRNA] (ISOFORM A)</scope>
    <scope>FUNCTION</scope>
    <scope>TISSUE SPECIFICITY</scope>
    <scope>DEVELOPMENTAL STAGE</scope>
    <scope>MUTAGENESIS OF ARG-243 AND 284-GLN--ASP-355</scope>
</reference>
<reference evidence="12" key="2">
    <citation type="journal article" date="1998" name="Science">
        <title>Genome sequence of the nematode C. elegans: a platform for investigating biology.</title>
        <authorList>
            <consortium name="The C. elegans sequencing consortium"/>
        </authorList>
    </citation>
    <scope>NUCLEOTIDE SEQUENCE [LARGE SCALE GENOMIC DNA]</scope>
    <source>
        <strain evidence="12">Bristol N2</strain>
    </source>
</reference>
<reference evidence="10" key="3">
    <citation type="journal article" date="2003" name="Dev. Biol.">
        <title>LIM homeobox gene-dependent expression of biogenic amine receptors in restricted regions of the C. elegans nervous system.</title>
        <authorList>
            <person name="Tsalik E.L."/>
            <person name="Niacaris T."/>
            <person name="Wenick A.S."/>
            <person name="Pau K."/>
            <person name="Avery L."/>
            <person name="Hobert O."/>
        </authorList>
    </citation>
    <scope>FUNCTION</scope>
    <scope>MUTAGENESIS OF 284-GLN--ASP-355</scope>
</reference>
<reference evidence="10" key="4">
    <citation type="journal article" date="2005" name="Dev. Biol.">
        <title>Cell-type specific regulation of serotonergic identity by the C. elegans LIM-homeodomain factor LIM-4.</title>
        <authorList>
            <person name="Zheng X."/>
            <person name="Chung S."/>
            <person name="Tanabe T."/>
            <person name="Sze J.Y."/>
        </authorList>
    </citation>
    <scope>FUNCTION</scope>
    <scope>DEVELOPMENTAL STAGE</scope>
    <scope>MUTAGENESIS OF 284-GLN--ASP-355</scope>
</reference>
<reference evidence="10" key="5">
    <citation type="journal article" date="2015" name="EMBO J.">
        <title>Postmitotic diversification of olfactory neuron types is mediated by differential activities of the HMG-box transcription factor SOX-2.</title>
        <authorList>
            <person name="Alqadah A."/>
            <person name="Hsieh Y.W."/>
            <person name="Vidal B."/>
            <person name="Chang C."/>
            <person name="Hobert O."/>
            <person name="Chuang C.F."/>
        </authorList>
    </citation>
    <scope>FUNCTION</scope>
    <scope>INTERACTION WITH SOX-2</scope>
</reference>
<reference evidence="10" key="6">
    <citation type="journal article" date="2015" name="PLoS Genet.">
        <title>The Evolutionarily Conserved LIM Homeodomain Protein LIM-4/LHX6 Specifies the Terminal Identity of a Cholinergic and Peptidergic C. elegans Sensory/Inter/Motor Neuron-Type.</title>
        <authorList>
            <person name="Kim J."/>
            <person name="Yeon J."/>
            <person name="Choi S.K."/>
            <person name="Huh Y.H."/>
            <person name="Fang Z."/>
            <person name="Park S.J."/>
            <person name="Kim M.O."/>
            <person name="Ryoo Z.Y."/>
            <person name="Kang K."/>
            <person name="Kweon H.S."/>
            <person name="Jeon W.B."/>
            <person name="Li C."/>
            <person name="Kim K."/>
        </authorList>
    </citation>
    <scope>FUNCTION</scope>
    <scope>TISSUE SPECIFICITY</scope>
    <scope>DEVELOPMENTAL STAGE</scope>
    <scope>MUTAGENESIS OF 284-GLN--ASP-355</scope>
</reference>
<name>LIM4_CAEEL</name>
<feature type="chain" id="PRO_0000452844" description="LIM/homeobox protein lim-4">
    <location>
        <begin position="1"/>
        <end position="355"/>
    </location>
</feature>
<feature type="domain" description="LIM zinc-binding 1" evidence="2">
    <location>
        <begin position="96"/>
        <end position="155"/>
    </location>
</feature>
<feature type="domain" description="LIM zinc-binding 2" evidence="2">
    <location>
        <begin position="166"/>
        <end position="228"/>
    </location>
</feature>
<feature type="DNA-binding region" description="Homeobox" evidence="1">
    <location>
        <begin position="239"/>
        <end position="298"/>
    </location>
</feature>
<feature type="region of interest" description="Disordered" evidence="4">
    <location>
        <begin position="291"/>
        <end position="336"/>
    </location>
</feature>
<feature type="compositionally biased region" description="Low complexity" evidence="4">
    <location>
        <begin position="306"/>
        <end position="326"/>
    </location>
</feature>
<feature type="splice variant" id="VSP_061066" description="In isoform c." evidence="10">
    <location>
        <begin position="152"/>
        <end position="162"/>
    </location>
</feature>
<feature type="splice variant" id="VSP_061067" description="In isoform b." evidence="10">
    <location>
        <begin position="152"/>
        <end position="160"/>
    </location>
</feature>
<feature type="mutagenesis site" description="In ky395; Abnormal expression of olfactory receptor str-2 in AWB olfactory neurons, defects in foraging behavior, and aberrant movements. Repulsive olfactory neuron AWB is transformed into the attractive olfactory neuron AWC." evidence="5">
    <original>R</original>
    <variation>Q</variation>
    <location>
        <position position="243"/>
    </location>
</feature>
<feature type="mutagenesis site" description="In ky403; Abnormal expression of olfactory receptor str-2 in AWB olfactory neurons, defects in foraging behavior, and aberrant movements. Repulsive olfactory neuron AWB is transformed into the attractive olfactory neuron AWC. Reduced expression of tph-1 and reduced serotonin immunoreactivity in serotonergic ADF neurons. Expression of neuropeptide flp-12 is abolished in the SMB sensory/inter/motor neurons. Expression of terminally differentiated SMB markers including cholinergic genes is abolished, but pan-neuronal genes such as chaperone unc-119 are unchanged. Exhibits aberrant expression of some but not all genes which are markers of RID motorneuron differentiation." evidence="5 6 7 8">
    <location>
        <begin position="284"/>
        <end position="355"/>
    </location>
</feature>
<proteinExistence type="evidence at protein level"/>
<gene>
    <name evidence="13" type="primary">lim-4</name>
    <name evidence="13" type="ORF">ZC64.4</name>
</gene>
<keyword id="KW-0025">Alternative splicing</keyword>
<keyword id="KW-0238">DNA-binding</keyword>
<keyword id="KW-0371">Homeobox</keyword>
<keyword id="KW-0440">LIM domain</keyword>
<keyword id="KW-0479">Metal-binding</keyword>
<keyword id="KW-0539">Nucleus</keyword>
<keyword id="KW-1185">Reference proteome</keyword>
<keyword id="KW-0677">Repeat</keyword>
<keyword id="KW-0804">Transcription</keyword>
<keyword id="KW-0805">Transcription regulation</keyword>
<keyword id="KW-0862">Zinc</keyword>
<evidence type="ECO:0000255" key="1">
    <source>
        <dbReference type="PROSITE-ProRule" id="PRU00108"/>
    </source>
</evidence>
<evidence type="ECO:0000255" key="2">
    <source>
        <dbReference type="PROSITE-ProRule" id="PRU00125"/>
    </source>
</evidence>
<evidence type="ECO:0000255" key="3">
    <source>
        <dbReference type="RuleBase" id="RU000682"/>
    </source>
</evidence>
<evidence type="ECO:0000256" key="4">
    <source>
        <dbReference type="SAM" id="MobiDB-lite"/>
    </source>
</evidence>
<evidence type="ECO:0000269" key="5">
    <source>
    </source>
</evidence>
<evidence type="ECO:0000269" key="6">
    <source>
    </source>
</evidence>
<evidence type="ECO:0000269" key="7">
    <source>
    </source>
</evidence>
<evidence type="ECO:0000269" key="8">
    <source>
    </source>
</evidence>
<evidence type="ECO:0000269" key="9">
    <source>
    </source>
</evidence>
<evidence type="ECO:0000305" key="10"/>
<evidence type="ECO:0000312" key="11">
    <source>
        <dbReference type="EMBL" id="AAB17273.1"/>
    </source>
</evidence>
<evidence type="ECO:0000312" key="12">
    <source>
        <dbReference type="Proteomes" id="UP000001940"/>
    </source>
</evidence>
<evidence type="ECO:0000312" key="13">
    <source>
        <dbReference type="WormBase" id="ZC64.4a"/>
    </source>
</evidence>
<evidence type="ECO:0000312" key="14">
    <source>
        <dbReference type="WormBase" id="ZC64.4b"/>
    </source>
</evidence>
<evidence type="ECO:0000312" key="15">
    <source>
        <dbReference type="WormBase" id="ZC64.4c"/>
    </source>
</evidence>
<dbReference type="EMBL" id="U72348">
    <property type="protein sequence ID" value="AAB17273.1"/>
    <property type="molecule type" value="mRNA"/>
</dbReference>
<dbReference type="EMBL" id="BX284606">
    <property type="protein sequence ID" value="CCD71434.1"/>
    <property type="molecule type" value="Genomic_DNA"/>
</dbReference>
<dbReference type="EMBL" id="BX284606">
    <property type="protein sequence ID" value="SMQ44709.1"/>
    <property type="molecule type" value="Genomic_DNA"/>
</dbReference>
<dbReference type="EMBL" id="BX284606">
    <property type="protein sequence ID" value="SMQ44710.1"/>
    <property type="molecule type" value="Genomic_DNA"/>
</dbReference>
<dbReference type="PIR" id="T27637">
    <property type="entry name" value="T27637"/>
</dbReference>
<dbReference type="RefSeq" id="NP_001338856.1">
    <molecule id="G5EEA1-2"/>
    <property type="nucleotide sequence ID" value="NM_001351879.2"/>
</dbReference>
<dbReference type="RefSeq" id="NP_001338857.1">
    <molecule id="G5EEA1-3"/>
    <property type="nucleotide sequence ID" value="NM_001351878.2"/>
</dbReference>
<dbReference type="RefSeq" id="NP_508669.1">
    <molecule id="G5EEA1-1"/>
    <property type="nucleotide sequence ID" value="NM_076268.2"/>
</dbReference>
<dbReference type="SMR" id="G5EEA1"/>
<dbReference type="FunCoup" id="G5EEA1">
    <property type="interactions" value="92"/>
</dbReference>
<dbReference type="IntAct" id="G5EEA1">
    <property type="interactions" value="2"/>
</dbReference>
<dbReference type="STRING" id="6239.ZC64.4a.1"/>
<dbReference type="PaxDb" id="6239-ZC64.4"/>
<dbReference type="EnsemblMetazoa" id="ZC64.4a.1">
    <molecule id="G5EEA1-1"/>
    <property type="protein sequence ID" value="ZC64.4a.1"/>
    <property type="gene ID" value="WBGene00002987"/>
</dbReference>
<dbReference type="EnsemblMetazoa" id="ZC64.4b.1">
    <molecule id="G5EEA1-2"/>
    <property type="protein sequence ID" value="ZC64.4b.1"/>
    <property type="gene ID" value="WBGene00002987"/>
</dbReference>
<dbReference type="EnsemblMetazoa" id="ZC64.4c.1">
    <molecule id="G5EEA1-3"/>
    <property type="protein sequence ID" value="ZC64.4c.1"/>
    <property type="gene ID" value="WBGene00002987"/>
</dbReference>
<dbReference type="GeneID" id="180672"/>
<dbReference type="KEGG" id="cel:CELE_ZC64.4"/>
<dbReference type="AGR" id="WB:WBGene00002987"/>
<dbReference type="CTD" id="180672"/>
<dbReference type="WormBase" id="ZC64.4a">
    <molecule id="G5EEA1-1"/>
    <property type="protein sequence ID" value="CE25675"/>
    <property type="gene ID" value="WBGene00002987"/>
    <property type="gene designation" value="lim-4"/>
</dbReference>
<dbReference type="WormBase" id="ZC64.4b">
    <molecule id="G5EEA1-2"/>
    <property type="protein sequence ID" value="CE51976"/>
    <property type="gene ID" value="WBGene00002987"/>
    <property type="gene designation" value="lim-4"/>
</dbReference>
<dbReference type="WormBase" id="ZC64.4c">
    <molecule id="G5EEA1-3"/>
    <property type="protein sequence ID" value="CE52031"/>
    <property type="gene ID" value="WBGene00002987"/>
    <property type="gene designation" value="lim-4"/>
</dbReference>
<dbReference type="eggNOG" id="KOG0490">
    <property type="taxonomic scope" value="Eukaryota"/>
</dbReference>
<dbReference type="GeneTree" id="ENSGT00940000172226"/>
<dbReference type="HOGENOM" id="CLU_781277_0_0_1"/>
<dbReference type="InParanoid" id="G5EEA1"/>
<dbReference type="OMA" id="RQKKWHQ"/>
<dbReference type="OrthoDB" id="10068367at2759"/>
<dbReference type="PhylomeDB" id="G5EEA1"/>
<dbReference type="PRO" id="PR:G5EEA1"/>
<dbReference type="Proteomes" id="UP000001940">
    <property type="component" value="Chromosome X"/>
</dbReference>
<dbReference type="Bgee" id="WBGene00002987">
    <property type="expression patterns" value="Expressed in pharyngeal muscle cell (C elegans) and 3 other cell types or tissues"/>
</dbReference>
<dbReference type="ExpressionAtlas" id="G5EEA1">
    <property type="expression patterns" value="baseline and differential"/>
</dbReference>
<dbReference type="GO" id="GO:0005634">
    <property type="term" value="C:nucleus"/>
    <property type="evidence" value="ECO:0000314"/>
    <property type="project" value="WormBase"/>
</dbReference>
<dbReference type="GO" id="GO:0003700">
    <property type="term" value="F:DNA-binding transcription factor activity"/>
    <property type="evidence" value="ECO:0000250"/>
    <property type="project" value="WormBase"/>
</dbReference>
<dbReference type="GO" id="GO:0000981">
    <property type="term" value="F:DNA-binding transcription factor activity, RNA polymerase II-specific"/>
    <property type="evidence" value="ECO:0000315"/>
    <property type="project" value="UniProtKB"/>
</dbReference>
<dbReference type="GO" id="GO:0046872">
    <property type="term" value="F:metal ion binding"/>
    <property type="evidence" value="ECO:0007669"/>
    <property type="project" value="UniProtKB-KW"/>
</dbReference>
<dbReference type="GO" id="GO:0000977">
    <property type="term" value="F:RNA polymerase II transcription regulatory region sequence-specific DNA binding"/>
    <property type="evidence" value="ECO:0000314"/>
    <property type="project" value="WormBase"/>
</dbReference>
<dbReference type="GO" id="GO:0001708">
    <property type="term" value="P:cell fate specification"/>
    <property type="evidence" value="ECO:0000315"/>
    <property type="project" value="WormBase"/>
</dbReference>
<dbReference type="GO" id="GO:0030182">
    <property type="term" value="P:neuron differentiation"/>
    <property type="evidence" value="ECO:0000315"/>
    <property type="project" value="UniProtKB"/>
</dbReference>
<dbReference type="GO" id="GO:0045944">
    <property type="term" value="P:positive regulation of transcription by RNA polymerase II"/>
    <property type="evidence" value="ECO:0000315"/>
    <property type="project" value="UniProtKB"/>
</dbReference>
<dbReference type="GO" id="GO:0006355">
    <property type="term" value="P:regulation of DNA-templated transcription"/>
    <property type="evidence" value="ECO:0000314"/>
    <property type="project" value="WormBase"/>
</dbReference>
<dbReference type="GO" id="GO:0045664">
    <property type="term" value="P:regulation of neuron differentiation"/>
    <property type="evidence" value="ECO:0000315"/>
    <property type="project" value="UniProtKB"/>
</dbReference>
<dbReference type="GO" id="GO:0006357">
    <property type="term" value="P:regulation of transcription by RNA polymerase II"/>
    <property type="evidence" value="ECO:0000315"/>
    <property type="project" value="UniProtKB"/>
</dbReference>
<dbReference type="GO" id="GO:0042427">
    <property type="term" value="P:serotonin biosynthetic process"/>
    <property type="evidence" value="ECO:0000315"/>
    <property type="project" value="UniProtKB"/>
</dbReference>
<dbReference type="CDD" id="cd00086">
    <property type="entry name" value="homeodomain"/>
    <property type="match status" value="1"/>
</dbReference>
<dbReference type="CDD" id="cd09379">
    <property type="entry name" value="LIM2_AWH"/>
    <property type="match status" value="1"/>
</dbReference>
<dbReference type="FunFam" id="2.10.110.10:FF:000006">
    <property type="entry name" value="LIM homeobox transcription factor 1-beta"/>
    <property type="match status" value="1"/>
</dbReference>
<dbReference type="FunFam" id="1.10.10.60:FF:000027">
    <property type="entry name" value="LIM/homeobox protein Lhx9"/>
    <property type="match status" value="1"/>
</dbReference>
<dbReference type="Gene3D" id="2.10.110.10">
    <property type="entry name" value="Cysteine Rich Protein"/>
    <property type="match status" value="2"/>
</dbReference>
<dbReference type="Gene3D" id="1.10.10.60">
    <property type="entry name" value="Homeodomain-like"/>
    <property type="match status" value="1"/>
</dbReference>
<dbReference type="InterPro" id="IPR001356">
    <property type="entry name" value="HD"/>
</dbReference>
<dbReference type="InterPro" id="IPR009057">
    <property type="entry name" value="Homeodomain-like_sf"/>
</dbReference>
<dbReference type="InterPro" id="IPR050453">
    <property type="entry name" value="LIM_Homeobox_TF"/>
</dbReference>
<dbReference type="InterPro" id="IPR001781">
    <property type="entry name" value="Znf_LIM"/>
</dbReference>
<dbReference type="PANTHER" id="PTHR24208">
    <property type="entry name" value="LIM/HOMEOBOX PROTEIN LHX"/>
    <property type="match status" value="1"/>
</dbReference>
<dbReference type="PANTHER" id="PTHR24208:SF127">
    <property type="entry name" value="LIM_HOMEOBOX PROTEIN AWH"/>
    <property type="match status" value="1"/>
</dbReference>
<dbReference type="Pfam" id="PF00046">
    <property type="entry name" value="Homeodomain"/>
    <property type="match status" value="1"/>
</dbReference>
<dbReference type="Pfam" id="PF00412">
    <property type="entry name" value="LIM"/>
    <property type="match status" value="2"/>
</dbReference>
<dbReference type="SMART" id="SM00389">
    <property type="entry name" value="HOX"/>
    <property type="match status" value="1"/>
</dbReference>
<dbReference type="SMART" id="SM00132">
    <property type="entry name" value="LIM"/>
    <property type="match status" value="2"/>
</dbReference>
<dbReference type="SUPFAM" id="SSF57716">
    <property type="entry name" value="Glucocorticoid receptor-like (DNA-binding domain)"/>
    <property type="match status" value="2"/>
</dbReference>
<dbReference type="SUPFAM" id="SSF46689">
    <property type="entry name" value="Homeodomain-like"/>
    <property type="match status" value="1"/>
</dbReference>
<dbReference type="PROSITE" id="PS50071">
    <property type="entry name" value="HOMEOBOX_2"/>
    <property type="match status" value="1"/>
</dbReference>
<dbReference type="PROSITE" id="PS00478">
    <property type="entry name" value="LIM_DOMAIN_1"/>
    <property type="match status" value="2"/>
</dbReference>
<dbReference type="PROSITE" id="PS50023">
    <property type="entry name" value="LIM_DOMAIN_2"/>
    <property type="match status" value="2"/>
</dbReference>
<organism evidence="12">
    <name type="scientific">Caenorhabditis elegans</name>
    <dbReference type="NCBI Taxonomy" id="6239"/>
    <lineage>
        <taxon>Eukaryota</taxon>
        <taxon>Metazoa</taxon>
        <taxon>Ecdysozoa</taxon>
        <taxon>Nematoda</taxon>
        <taxon>Chromadorea</taxon>
        <taxon>Rhabditida</taxon>
        <taxon>Rhabditina</taxon>
        <taxon>Rhabditomorpha</taxon>
        <taxon>Rhabditoidea</taxon>
        <taxon>Rhabditidae</taxon>
        <taxon>Peloderinae</taxon>
        <taxon>Caenorhabditis</taxon>
    </lineage>
</organism>